<comment type="function">
    <text evidence="1">Catalyzes the reversible reaction in which hydroxymethyl group from 5,10-methylenetetrahydrofolate is transferred onto alpha-ketoisovalerate to form ketopantoate.</text>
</comment>
<comment type="catalytic activity">
    <reaction evidence="1">
        <text>3-methyl-2-oxobutanoate + (6R)-5,10-methylene-5,6,7,8-tetrahydrofolate + H2O = 2-dehydropantoate + (6S)-5,6,7,8-tetrahydrofolate</text>
        <dbReference type="Rhea" id="RHEA:11824"/>
        <dbReference type="ChEBI" id="CHEBI:11561"/>
        <dbReference type="ChEBI" id="CHEBI:11851"/>
        <dbReference type="ChEBI" id="CHEBI:15377"/>
        <dbReference type="ChEBI" id="CHEBI:15636"/>
        <dbReference type="ChEBI" id="CHEBI:57453"/>
        <dbReference type="EC" id="2.1.2.11"/>
    </reaction>
</comment>
<comment type="cofactor">
    <cofactor evidence="1">
        <name>Mg(2+)</name>
        <dbReference type="ChEBI" id="CHEBI:18420"/>
    </cofactor>
    <text evidence="1">Binds 1 Mg(2+) ion per subunit.</text>
</comment>
<comment type="pathway">
    <text evidence="1">Cofactor biosynthesis; (R)-pantothenate biosynthesis; (R)-pantoate from 3-methyl-2-oxobutanoate: step 1/2.</text>
</comment>
<comment type="subunit">
    <text evidence="1">Homodecamer; pentamer of dimers.</text>
</comment>
<comment type="subcellular location">
    <subcellularLocation>
        <location evidence="1">Cytoplasm</location>
    </subcellularLocation>
</comment>
<comment type="similarity">
    <text evidence="1">Belongs to the PanB family.</text>
</comment>
<dbReference type="EC" id="2.1.2.11" evidence="1"/>
<dbReference type="EMBL" id="CP000472">
    <property type="protein sequence ID" value="ACJ31035.1"/>
    <property type="molecule type" value="Genomic_DNA"/>
</dbReference>
<dbReference type="RefSeq" id="WP_020914370.1">
    <property type="nucleotide sequence ID" value="NC_011566.1"/>
</dbReference>
<dbReference type="SMR" id="B8CTC6"/>
<dbReference type="STRING" id="225849.swp_4390"/>
<dbReference type="KEGG" id="swp:swp_4390"/>
<dbReference type="eggNOG" id="COG0413">
    <property type="taxonomic scope" value="Bacteria"/>
</dbReference>
<dbReference type="HOGENOM" id="CLU_036645_1_0_6"/>
<dbReference type="OrthoDB" id="9781789at2"/>
<dbReference type="UniPathway" id="UPA00028">
    <property type="reaction ID" value="UER00003"/>
</dbReference>
<dbReference type="Proteomes" id="UP000000753">
    <property type="component" value="Chromosome"/>
</dbReference>
<dbReference type="GO" id="GO:0005737">
    <property type="term" value="C:cytoplasm"/>
    <property type="evidence" value="ECO:0007669"/>
    <property type="project" value="UniProtKB-SubCell"/>
</dbReference>
<dbReference type="GO" id="GO:0003864">
    <property type="term" value="F:3-methyl-2-oxobutanoate hydroxymethyltransferase activity"/>
    <property type="evidence" value="ECO:0007669"/>
    <property type="project" value="UniProtKB-UniRule"/>
</dbReference>
<dbReference type="GO" id="GO:0000287">
    <property type="term" value="F:magnesium ion binding"/>
    <property type="evidence" value="ECO:0007669"/>
    <property type="project" value="TreeGrafter"/>
</dbReference>
<dbReference type="GO" id="GO:0015940">
    <property type="term" value="P:pantothenate biosynthetic process"/>
    <property type="evidence" value="ECO:0007669"/>
    <property type="project" value="UniProtKB-UniRule"/>
</dbReference>
<dbReference type="CDD" id="cd06557">
    <property type="entry name" value="KPHMT-like"/>
    <property type="match status" value="1"/>
</dbReference>
<dbReference type="FunFam" id="3.20.20.60:FF:000003">
    <property type="entry name" value="3-methyl-2-oxobutanoate hydroxymethyltransferase"/>
    <property type="match status" value="1"/>
</dbReference>
<dbReference type="Gene3D" id="3.20.20.60">
    <property type="entry name" value="Phosphoenolpyruvate-binding domains"/>
    <property type="match status" value="1"/>
</dbReference>
<dbReference type="HAMAP" id="MF_00156">
    <property type="entry name" value="PanB"/>
    <property type="match status" value="1"/>
</dbReference>
<dbReference type="InterPro" id="IPR003700">
    <property type="entry name" value="Pantoate_hydroxy_MeTrfase"/>
</dbReference>
<dbReference type="InterPro" id="IPR015813">
    <property type="entry name" value="Pyrv/PenolPyrv_kinase-like_dom"/>
</dbReference>
<dbReference type="InterPro" id="IPR040442">
    <property type="entry name" value="Pyrv_kinase-like_dom_sf"/>
</dbReference>
<dbReference type="NCBIfam" id="TIGR00222">
    <property type="entry name" value="panB"/>
    <property type="match status" value="1"/>
</dbReference>
<dbReference type="NCBIfam" id="NF001452">
    <property type="entry name" value="PRK00311.1"/>
    <property type="match status" value="1"/>
</dbReference>
<dbReference type="PANTHER" id="PTHR20881">
    <property type="entry name" value="3-METHYL-2-OXOBUTANOATE HYDROXYMETHYLTRANSFERASE"/>
    <property type="match status" value="1"/>
</dbReference>
<dbReference type="PANTHER" id="PTHR20881:SF0">
    <property type="entry name" value="3-METHYL-2-OXOBUTANOATE HYDROXYMETHYLTRANSFERASE"/>
    <property type="match status" value="1"/>
</dbReference>
<dbReference type="Pfam" id="PF02548">
    <property type="entry name" value="Pantoate_transf"/>
    <property type="match status" value="1"/>
</dbReference>
<dbReference type="PIRSF" id="PIRSF000388">
    <property type="entry name" value="Pantoate_hydroxy_MeTrfase"/>
    <property type="match status" value="1"/>
</dbReference>
<dbReference type="SUPFAM" id="SSF51621">
    <property type="entry name" value="Phosphoenolpyruvate/pyruvate domain"/>
    <property type="match status" value="1"/>
</dbReference>
<reference key="1">
    <citation type="journal article" date="2008" name="PLoS ONE">
        <title>Environmental adaptation: genomic analysis of the piezotolerant and psychrotolerant deep-sea iron reducing bacterium Shewanella piezotolerans WP3.</title>
        <authorList>
            <person name="Wang F."/>
            <person name="Wang J."/>
            <person name="Jian H."/>
            <person name="Zhang B."/>
            <person name="Li S."/>
            <person name="Wang F."/>
            <person name="Zeng X."/>
            <person name="Gao L."/>
            <person name="Bartlett D.H."/>
            <person name="Yu J."/>
            <person name="Hu S."/>
            <person name="Xiao X."/>
        </authorList>
    </citation>
    <scope>NUCLEOTIDE SEQUENCE [LARGE SCALE GENOMIC DNA]</scope>
    <source>
        <strain>WP3 / JCM 13877</strain>
    </source>
</reference>
<gene>
    <name evidence="1" type="primary">panB</name>
    <name type="ordered locus">swp_4390</name>
</gene>
<feature type="chain" id="PRO_1000118130" description="3-methyl-2-oxobutanoate hydroxymethyltransferase">
    <location>
        <begin position="1"/>
        <end position="264"/>
    </location>
</feature>
<feature type="active site" description="Proton acceptor" evidence="1">
    <location>
        <position position="181"/>
    </location>
</feature>
<feature type="binding site" evidence="1">
    <location>
        <begin position="45"/>
        <end position="46"/>
    </location>
    <ligand>
        <name>3-methyl-2-oxobutanoate</name>
        <dbReference type="ChEBI" id="CHEBI:11851"/>
    </ligand>
</feature>
<feature type="binding site" evidence="1">
    <location>
        <position position="45"/>
    </location>
    <ligand>
        <name>Mg(2+)</name>
        <dbReference type="ChEBI" id="CHEBI:18420"/>
    </ligand>
</feature>
<feature type="binding site" evidence="1">
    <location>
        <position position="84"/>
    </location>
    <ligand>
        <name>3-methyl-2-oxobutanoate</name>
        <dbReference type="ChEBI" id="CHEBI:11851"/>
    </ligand>
</feature>
<feature type="binding site" evidence="1">
    <location>
        <position position="84"/>
    </location>
    <ligand>
        <name>Mg(2+)</name>
        <dbReference type="ChEBI" id="CHEBI:18420"/>
    </ligand>
</feature>
<feature type="binding site" evidence="1">
    <location>
        <position position="112"/>
    </location>
    <ligand>
        <name>3-methyl-2-oxobutanoate</name>
        <dbReference type="ChEBI" id="CHEBI:11851"/>
    </ligand>
</feature>
<feature type="binding site" evidence="1">
    <location>
        <position position="114"/>
    </location>
    <ligand>
        <name>Mg(2+)</name>
        <dbReference type="ChEBI" id="CHEBI:18420"/>
    </ligand>
</feature>
<name>PANB_SHEPW</name>
<organism>
    <name type="scientific">Shewanella piezotolerans (strain WP3 / JCM 13877)</name>
    <dbReference type="NCBI Taxonomy" id="225849"/>
    <lineage>
        <taxon>Bacteria</taxon>
        <taxon>Pseudomonadati</taxon>
        <taxon>Pseudomonadota</taxon>
        <taxon>Gammaproteobacteria</taxon>
        <taxon>Alteromonadales</taxon>
        <taxon>Shewanellaceae</taxon>
        <taxon>Shewanella</taxon>
    </lineage>
</organism>
<proteinExistence type="inferred from homology"/>
<protein>
    <recommendedName>
        <fullName evidence="1">3-methyl-2-oxobutanoate hydroxymethyltransferase</fullName>
        <ecNumber evidence="1">2.1.2.11</ecNumber>
    </recommendedName>
    <alternativeName>
        <fullName evidence="1">Ketopantoate hydroxymethyltransferase</fullName>
        <shortName evidence="1">KPHMT</shortName>
    </alternativeName>
</protein>
<sequence length="264" mass="28331">MSKITSSTLRTFKSEGKKFTALTAYDASFANAFDSEGVDVLLVGDSMGMVLQGHNDTLPVTVDDIAYHTRCVRRGVERALLIADMPFMSYATPEQTMTNATTLMQAGANMVKVEGGHWLLESVKMLTERGIPVCAHLGLTPQSVHVFGGFKIQGRDADNAQRILDEAKALEAAGAQLLVVECIPAPLAKAITEALTIPVIGIGAGADTDGQILVMHDVLGISSGYIPRFSKNYLKQTGEIRSAVRAYIDEVAQGVFPAEEHTFS</sequence>
<evidence type="ECO:0000255" key="1">
    <source>
        <dbReference type="HAMAP-Rule" id="MF_00156"/>
    </source>
</evidence>
<keyword id="KW-0963">Cytoplasm</keyword>
<keyword id="KW-0460">Magnesium</keyword>
<keyword id="KW-0479">Metal-binding</keyword>
<keyword id="KW-0566">Pantothenate biosynthesis</keyword>
<keyword id="KW-0808">Transferase</keyword>
<accession>B8CTC6</accession>